<evidence type="ECO:0000305" key="1"/>
<keyword id="KW-0903">Direct protein sequencing</keyword>
<keyword id="KW-0372">Hormone</keyword>
<keyword id="KW-0964">Secreted</keyword>
<feature type="peptide" id="PRO_0000043898" description="Gastrin/cholecystokinin-like peptide D1">
    <location>
        <begin position="1"/>
        <end position="9"/>
    </location>
</feature>
<dbReference type="PIR" id="S47432">
    <property type="entry name" value="S47432"/>
</dbReference>
<dbReference type="GO" id="GO:0005576">
    <property type="term" value="C:extracellular region"/>
    <property type="evidence" value="ECO:0007669"/>
    <property type="project" value="UniProtKB-SubCell"/>
</dbReference>
<dbReference type="GO" id="GO:0005179">
    <property type="term" value="F:hormone activity"/>
    <property type="evidence" value="ECO:0007669"/>
    <property type="project" value="UniProtKB-KW"/>
</dbReference>
<name>D1_NEPNO</name>
<accession>P24816</accession>
<protein>
    <recommendedName>
        <fullName>Gastrin/cholecystokinin-like peptide D1</fullName>
    </recommendedName>
</protein>
<proteinExistence type="evidence at protein level"/>
<comment type="function">
    <text>May control digestion processes in crustaceans.</text>
</comment>
<comment type="subcellular location">
    <subcellularLocation>
        <location>Secreted</location>
    </subcellularLocation>
</comment>
<comment type="similarity">
    <text evidence="1">Belongs to the gastrin/cholecystokinin family.</text>
</comment>
<reference key="1">
    <citation type="journal article" date="1991" name="Biochimie">
        <title>Structure and biological activity of crustacean gastrointestinal peptides identified with antibodies to gastrin/cholecystokinin.</title>
        <authorList>
            <person name="Favrel P."/>
            <person name="Kegel G."/>
            <person name="Sedlmeier D."/>
            <person name="Keller R."/>
            <person name="van Wormhoudt A."/>
        </authorList>
    </citation>
    <scope>PROTEIN SEQUENCE</scope>
    <source>
        <tissue>Stomach</tissue>
    </source>
</reference>
<sequence>SEGGQDFWL</sequence>
<organism>
    <name type="scientific">Nephrops norvegicus</name>
    <name type="common">Norway lobster</name>
    <dbReference type="NCBI Taxonomy" id="6829"/>
    <lineage>
        <taxon>Eukaryota</taxon>
        <taxon>Metazoa</taxon>
        <taxon>Ecdysozoa</taxon>
        <taxon>Arthropoda</taxon>
        <taxon>Crustacea</taxon>
        <taxon>Multicrustacea</taxon>
        <taxon>Malacostraca</taxon>
        <taxon>Eumalacostraca</taxon>
        <taxon>Eucarida</taxon>
        <taxon>Decapoda</taxon>
        <taxon>Pleocyemata</taxon>
        <taxon>Astacidea</taxon>
        <taxon>Nephropoidea</taxon>
        <taxon>Nephropidae</taxon>
        <taxon>Nephrops</taxon>
    </lineage>
</organism>